<feature type="chain" id="PRO_0000391855" description="DDRGK domain-containing protein 1">
    <location>
        <begin position="1"/>
        <end position="289"/>
    </location>
</feature>
<feature type="topological domain" description="Lumenal" evidence="5">
    <location>
        <begin position="1"/>
        <end position="2"/>
    </location>
</feature>
<feature type="transmembrane region" description="Helical" evidence="3">
    <location>
        <begin position="3"/>
        <end position="23"/>
    </location>
</feature>
<feature type="topological domain" description="Cytoplasmic" evidence="5">
    <location>
        <begin position="24"/>
        <end position="289"/>
    </location>
</feature>
<feature type="region of interest" description="Disordered" evidence="4">
    <location>
        <begin position="65"/>
        <end position="168"/>
    </location>
</feature>
<feature type="compositionally biased region" description="Acidic residues" evidence="4">
    <location>
        <begin position="70"/>
        <end position="85"/>
    </location>
</feature>
<feature type="compositionally biased region" description="Basic and acidic residues" evidence="4">
    <location>
        <begin position="87"/>
        <end position="166"/>
    </location>
</feature>
<accession>C0KYB6</accession>
<evidence type="ECO:0000250" key="1">
    <source>
        <dbReference type="UniProtKB" id="Q96HY6"/>
    </source>
</evidence>
<evidence type="ECO:0000250" key="2">
    <source>
        <dbReference type="UniProtKB" id="Q9VDD1"/>
    </source>
</evidence>
<evidence type="ECO:0000255" key="3"/>
<evidence type="ECO:0000256" key="4">
    <source>
        <dbReference type="SAM" id="MobiDB-lite"/>
    </source>
</evidence>
<evidence type="ECO:0000305" key="5"/>
<protein>
    <recommendedName>
        <fullName>DDRGK domain-containing protein 1</fullName>
    </recommendedName>
</protein>
<name>DDRGK_BOMMO</name>
<sequence length="289" mass="32975">MDPFILAAIISGIVIIILSIAFLRVSQVKPQAAARPRAVVQRDGGPGRVQAVRNQRARMRANAARHQAALEEEPEIQEEADEGAPDIDQKIDFDDKMGAKKRAKMEAKLEKKKAHEAEEHLREIKKKKEEEQEQERKKIEEKQEEEERKREEAEKKAEDERKKREQEEYEAMKAAFSIEGEGFDENEEEDRESLLRDFIGYIKTQKVVLLEDLAAHFKLKTQAAIDRITELQASGELTGVIDDRGKFIYISQSELESIAKFIKQRGRVSIAELAECSNDLINLAPVTVP</sequence>
<proteinExistence type="evidence at transcript level"/>
<organism>
    <name type="scientific">Bombyx mori</name>
    <name type="common">Silk moth</name>
    <dbReference type="NCBI Taxonomy" id="7091"/>
    <lineage>
        <taxon>Eukaryota</taxon>
        <taxon>Metazoa</taxon>
        <taxon>Ecdysozoa</taxon>
        <taxon>Arthropoda</taxon>
        <taxon>Hexapoda</taxon>
        <taxon>Insecta</taxon>
        <taxon>Pterygota</taxon>
        <taxon>Neoptera</taxon>
        <taxon>Endopterygota</taxon>
        <taxon>Lepidoptera</taxon>
        <taxon>Glossata</taxon>
        <taxon>Ditrysia</taxon>
        <taxon>Bombycoidea</taxon>
        <taxon>Bombycidae</taxon>
        <taxon>Bombycinae</taxon>
        <taxon>Bombyx</taxon>
    </lineage>
</organism>
<keyword id="KW-0256">Endoplasmic reticulum</keyword>
<keyword id="KW-0472">Membrane</keyword>
<keyword id="KW-1185">Reference proteome</keyword>
<keyword id="KW-0812">Transmembrane</keyword>
<keyword id="KW-1133">Transmembrane helix</keyword>
<keyword id="KW-0833">Ubl conjugation pathway</keyword>
<comment type="function">
    <text evidence="1 2">Substrate adapter for ufmylation, the covalent attachment of the ubiquitin-like modifier UFM1 to substrate proteins (By similarity). Required for ufmylation of Atg9; protects the nervous system during aging, possibly by stabilizing Atg9 and supporting its function (By similarity).</text>
</comment>
<comment type="subunit">
    <text evidence="2">Interacts with Atg9; the interaction is transient.</text>
</comment>
<comment type="subcellular location">
    <subcellularLocation>
        <location evidence="1">Endoplasmic reticulum membrane</location>
        <topology evidence="1">Single-pass membrane protein</topology>
    </subcellularLocation>
</comment>
<comment type="similarity">
    <text evidence="5">Belongs to the DDRGK1 family.</text>
</comment>
<dbReference type="EMBL" id="FJ645927">
    <property type="protein sequence ID" value="ACN56793.1"/>
    <property type="molecule type" value="mRNA"/>
</dbReference>
<dbReference type="RefSeq" id="NP_001139535.1">
    <property type="nucleotide sequence ID" value="NM_001146063.1"/>
</dbReference>
<dbReference type="SMR" id="C0KYB6"/>
<dbReference type="FunCoup" id="C0KYB6">
    <property type="interactions" value="473"/>
</dbReference>
<dbReference type="STRING" id="7091.C0KYB6"/>
<dbReference type="PaxDb" id="7091-BGIBMGA011004-TA"/>
<dbReference type="EnsemblMetazoa" id="NM_001146063.1">
    <property type="protein sequence ID" value="NP_001139535.1"/>
    <property type="gene ID" value="LOC100271899"/>
</dbReference>
<dbReference type="GeneID" id="100271899"/>
<dbReference type="KEGG" id="bmor:100271899"/>
<dbReference type="CTD" id="65992"/>
<dbReference type="eggNOG" id="KOG3054">
    <property type="taxonomic scope" value="Eukaryota"/>
</dbReference>
<dbReference type="HOGENOM" id="CLU_059562_1_0_1"/>
<dbReference type="InParanoid" id="C0KYB6"/>
<dbReference type="OrthoDB" id="644339at7088"/>
<dbReference type="Proteomes" id="UP000005204">
    <property type="component" value="Unassembled WGS sequence"/>
</dbReference>
<dbReference type="GO" id="GO:0005789">
    <property type="term" value="C:endoplasmic reticulum membrane"/>
    <property type="evidence" value="ECO:0007669"/>
    <property type="project" value="UniProtKB-SubCell"/>
</dbReference>
<dbReference type="GO" id="GO:0044389">
    <property type="term" value="F:ubiquitin-like protein ligase binding"/>
    <property type="evidence" value="ECO:0007669"/>
    <property type="project" value="TreeGrafter"/>
</dbReference>
<dbReference type="FunFam" id="1.10.10.10:FF:000143">
    <property type="entry name" value="DDRGK domain-containing protein 1"/>
    <property type="match status" value="1"/>
</dbReference>
<dbReference type="Gene3D" id="1.10.10.10">
    <property type="entry name" value="Winged helix-like DNA-binding domain superfamily/Winged helix DNA-binding domain"/>
    <property type="match status" value="1"/>
</dbReference>
<dbReference type="InterPro" id="IPR019153">
    <property type="entry name" value="DDRGK_dom-contain"/>
</dbReference>
<dbReference type="InterPro" id="IPR050899">
    <property type="entry name" value="DDRGK_domain-containing"/>
</dbReference>
<dbReference type="InterPro" id="IPR036388">
    <property type="entry name" value="WH-like_DNA-bd_sf"/>
</dbReference>
<dbReference type="InterPro" id="IPR036390">
    <property type="entry name" value="WH_DNA-bd_sf"/>
</dbReference>
<dbReference type="PANTHER" id="PTHR48176">
    <property type="entry name" value="DDRGK DOMAIN-CONTAINING PROTEIN 1"/>
    <property type="match status" value="1"/>
</dbReference>
<dbReference type="PANTHER" id="PTHR48176:SF1">
    <property type="entry name" value="DDRGK DOMAIN-CONTAINING PROTEIN 1"/>
    <property type="match status" value="1"/>
</dbReference>
<dbReference type="Pfam" id="PF09756">
    <property type="entry name" value="DDRGK"/>
    <property type="match status" value="1"/>
</dbReference>
<dbReference type="SMART" id="SM01128">
    <property type="entry name" value="DDRGK"/>
    <property type="match status" value="1"/>
</dbReference>
<dbReference type="SUPFAM" id="SSF46785">
    <property type="entry name" value="Winged helix' DNA-binding domain"/>
    <property type="match status" value="1"/>
</dbReference>
<reference key="1">
    <citation type="submission" date="2009-01" db="EMBL/GenBank/DDBJ databases">
        <title>Molecular cloning,sequence analysis of a gene BmDDRGK (DDRGK super family member) from Bombyx mori.</title>
        <authorList>
            <person name="Zong Z.P."/>
            <person name="Li Y.N."/>
            <person name="Bu C.Y."/>
            <person name="Jia R."/>
            <person name="Zhang Y.Z."/>
            <person name="Zhang Z.F."/>
        </authorList>
    </citation>
    <scope>NUCLEOTIDE SEQUENCE [MRNA]</scope>
</reference>